<keyword id="KW-0378">Hydrolase</keyword>
<keyword id="KW-0479">Metal-binding</keyword>
<keyword id="KW-1185">Reference proteome</keyword>
<keyword id="KW-0862">Zinc</keyword>
<dbReference type="EC" id="3.5.1.103" evidence="1"/>
<dbReference type="EMBL" id="AP006618">
    <property type="protein sequence ID" value="BAD59609.1"/>
    <property type="molecule type" value="Genomic_DNA"/>
</dbReference>
<dbReference type="RefSeq" id="WP_011211293.1">
    <property type="nucleotide sequence ID" value="NC_006361.1"/>
</dbReference>
<dbReference type="SMR" id="Q5YQD2"/>
<dbReference type="STRING" id="247156.NFA_47570"/>
<dbReference type="GeneID" id="61135355"/>
<dbReference type="KEGG" id="nfa:NFA_47570"/>
<dbReference type="eggNOG" id="COG2120">
    <property type="taxonomic scope" value="Bacteria"/>
</dbReference>
<dbReference type="HOGENOM" id="CLU_049311_2_1_11"/>
<dbReference type="OrthoDB" id="158614at2"/>
<dbReference type="Proteomes" id="UP000006820">
    <property type="component" value="Chromosome"/>
</dbReference>
<dbReference type="GO" id="GO:0035595">
    <property type="term" value="F:N-acetylglucosaminylinositol deacetylase activity"/>
    <property type="evidence" value="ECO:0007669"/>
    <property type="project" value="UniProtKB-EC"/>
</dbReference>
<dbReference type="GO" id="GO:0008270">
    <property type="term" value="F:zinc ion binding"/>
    <property type="evidence" value="ECO:0007669"/>
    <property type="project" value="UniProtKB-UniRule"/>
</dbReference>
<dbReference type="GO" id="GO:0010125">
    <property type="term" value="P:mycothiol biosynthetic process"/>
    <property type="evidence" value="ECO:0007669"/>
    <property type="project" value="UniProtKB-UniRule"/>
</dbReference>
<dbReference type="Gene3D" id="3.40.50.10320">
    <property type="entry name" value="LmbE-like"/>
    <property type="match status" value="1"/>
</dbReference>
<dbReference type="HAMAP" id="MF_01696">
    <property type="entry name" value="MshB"/>
    <property type="match status" value="1"/>
</dbReference>
<dbReference type="InterPro" id="IPR003737">
    <property type="entry name" value="GlcNAc_PI_deacetylase-related"/>
</dbReference>
<dbReference type="InterPro" id="IPR024078">
    <property type="entry name" value="LmbE-like_dom_sf"/>
</dbReference>
<dbReference type="InterPro" id="IPR017810">
    <property type="entry name" value="Mycothiol_biosynthesis_MshB"/>
</dbReference>
<dbReference type="NCBIfam" id="TIGR03445">
    <property type="entry name" value="mycothiol_MshB"/>
    <property type="match status" value="1"/>
</dbReference>
<dbReference type="PANTHER" id="PTHR12993:SF26">
    <property type="entry name" value="1D-MYO-INOSITOL 2-ACETAMIDO-2-DEOXY-ALPHA-D-GLUCOPYRANOSIDE DEACETYLASE"/>
    <property type="match status" value="1"/>
</dbReference>
<dbReference type="PANTHER" id="PTHR12993">
    <property type="entry name" value="N-ACETYLGLUCOSAMINYL-PHOSPHATIDYLINOSITOL DE-N-ACETYLASE-RELATED"/>
    <property type="match status" value="1"/>
</dbReference>
<dbReference type="Pfam" id="PF02585">
    <property type="entry name" value="PIG-L"/>
    <property type="match status" value="1"/>
</dbReference>
<dbReference type="SUPFAM" id="SSF102588">
    <property type="entry name" value="LmbE-like"/>
    <property type="match status" value="1"/>
</dbReference>
<comment type="function">
    <text evidence="1">Catalyzes the deacetylation of 1D-myo-inositol 2-acetamido-2-deoxy-alpha-D-glucopyranoside (GlcNAc-Ins) in the mycothiol biosynthesis pathway.</text>
</comment>
<comment type="catalytic activity">
    <reaction evidence="1">
        <text>1D-myo-inositol 2-acetamido-2-deoxy-alpha-D-glucopyranoside + H2O = 1D-myo-inositol 2-amino-2-deoxy-alpha-D-glucopyranoside + acetate</text>
        <dbReference type="Rhea" id="RHEA:26180"/>
        <dbReference type="ChEBI" id="CHEBI:15377"/>
        <dbReference type="ChEBI" id="CHEBI:30089"/>
        <dbReference type="ChEBI" id="CHEBI:52442"/>
        <dbReference type="ChEBI" id="CHEBI:58886"/>
        <dbReference type="EC" id="3.5.1.103"/>
    </reaction>
</comment>
<comment type="cofactor">
    <cofactor evidence="1">
        <name>Zn(2+)</name>
        <dbReference type="ChEBI" id="CHEBI:29105"/>
    </cofactor>
    <text evidence="1">Binds 1 zinc ion per subunit.</text>
</comment>
<comment type="similarity">
    <text evidence="1">Belongs to the MshB deacetylase family.</text>
</comment>
<proteinExistence type="inferred from homology"/>
<gene>
    <name evidence="1" type="primary">mshB</name>
    <name type="ordered locus">NFA_47570</name>
</gene>
<name>MSHB_NOCFA</name>
<protein>
    <recommendedName>
        <fullName evidence="1">1D-myo-inositol 2-acetamido-2-deoxy-alpha-D-glucopyranoside deacetylase</fullName>
        <shortName evidence="1">GlcNAc-Ins deacetylase</shortName>
        <ecNumber evidence="1">3.5.1.103</ecNumber>
    </recommendedName>
    <alternativeName>
        <fullName>N-acetyl-1-D-myo-inositol 2-amino-2-deoxy-alpha-D-glucopyranoside deacetylase</fullName>
    </alternativeName>
</protein>
<sequence>MSTATGGLLLVHAHPDDETITTGGTIARYRARGVPVTVVTCTLGEEGEVIGEQWAQLAADRADQLGGYRILELTRALDALDAGPPRFLGGAGRWRDSGMAGTPSAEHPRAFVNSGPEAVEALVEVLLDLRPRVVVGYDPNGGYGHPDHIRAHRVTTEAVRAAAERGWDVPKFYWTVTDADMLRLHTEALARRTAAGLPGALPRGWRLPAADELACVASDTVTTTVDVAEVLAAKRAALRAHATQITVAPSGREFALSNNIAQPVLPEEHYVLVRGRRGPAGPDGREHDLFAGLDGPAT</sequence>
<evidence type="ECO:0000255" key="1">
    <source>
        <dbReference type="HAMAP-Rule" id="MF_01696"/>
    </source>
</evidence>
<evidence type="ECO:0000256" key="2">
    <source>
        <dbReference type="SAM" id="MobiDB-lite"/>
    </source>
</evidence>
<feature type="chain" id="PRO_0000400211" description="1D-myo-inositol 2-acetamido-2-deoxy-alpha-D-glucopyranoside deacetylase">
    <location>
        <begin position="1"/>
        <end position="298"/>
    </location>
</feature>
<feature type="region of interest" description="Disordered" evidence="2">
    <location>
        <begin position="277"/>
        <end position="298"/>
    </location>
</feature>
<feature type="binding site" evidence="1">
    <location>
        <position position="14"/>
    </location>
    <ligand>
        <name>Zn(2+)</name>
        <dbReference type="ChEBI" id="CHEBI:29105"/>
    </ligand>
</feature>
<feature type="binding site" evidence="1">
    <location>
        <position position="17"/>
    </location>
    <ligand>
        <name>Zn(2+)</name>
        <dbReference type="ChEBI" id="CHEBI:29105"/>
    </ligand>
</feature>
<feature type="binding site" evidence="1">
    <location>
        <position position="148"/>
    </location>
    <ligand>
        <name>Zn(2+)</name>
        <dbReference type="ChEBI" id="CHEBI:29105"/>
    </ligand>
</feature>
<reference key="1">
    <citation type="journal article" date="2004" name="Proc. Natl. Acad. Sci. U.S.A.">
        <title>The complete genomic sequence of Nocardia farcinica IFM 10152.</title>
        <authorList>
            <person name="Ishikawa J."/>
            <person name="Yamashita A."/>
            <person name="Mikami Y."/>
            <person name="Hoshino Y."/>
            <person name="Kurita H."/>
            <person name="Hotta K."/>
            <person name="Shiba T."/>
            <person name="Hattori M."/>
        </authorList>
    </citation>
    <scope>NUCLEOTIDE SEQUENCE [LARGE SCALE GENOMIC DNA]</scope>
    <source>
        <strain>IFM 10152</strain>
    </source>
</reference>
<organism>
    <name type="scientific">Nocardia farcinica (strain IFM 10152)</name>
    <dbReference type="NCBI Taxonomy" id="247156"/>
    <lineage>
        <taxon>Bacteria</taxon>
        <taxon>Bacillati</taxon>
        <taxon>Actinomycetota</taxon>
        <taxon>Actinomycetes</taxon>
        <taxon>Mycobacteriales</taxon>
        <taxon>Nocardiaceae</taxon>
        <taxon>Nocardia</taxon>
    </lineage>
</organism>
<accession>Q5YQD2</accession>